<keyword id="KW-0158">Chromosome</keyword>
<keyword id="KW-0217">Developmental protein</keyword>
<keyword id="KW-0221">Differentiation</keyword>
<keyword id="KW-0226">DNA condensation</keyword>
<keyword id="KW-0238">DNA-binding</keyword>
<keyword id="KW-0544">Nucleosome core</keyword>
<keyword id="KW-0539">Nucleus</keyword>
<keyword id="KW-0744">Spermatogenesis</keyword>
<organism>
    <name type="scientific">Trachypithecus francoisi</name>
    <name type="common">Francois' leaf monkey</name>
    <name type="synonym">Presbytis francoisi</name>
    <dbReference type="NCBI Taxonomy" id="54180"/>
    <lineage>
        <taxon>Eukaryota</taxon>
        <taxon>Metazoa</taxon>
        <taxon>Chordata</taxon>
        <taxon>Craniata</taxon>
        <taxon>Vertebrata</taxon>
        <taxon>Euteleostomi</taxon>
        <taxon>Mammalia</taxon>
        <taxon>Eutheria</taxon>
        <taxon>Euarchontoglires</taxon>
        <taxon>Primates</taxon>
        <taxon>Haplorrhini</taxon>
        <taxon>Catarrhini</taxon>
        <taxon>Cercopithecidae</taxon>
        <taxon>Colobinae</taxon>
        <taxon>Trachypithecus</taxon>
    </lineage>
</organism>
<reference key="1">
    <citation type="submission" date="1998-10" db="EMBL/GenBank/DDBJ databases">
        <title>Positive Darwinian selection on the lineage leading to humans.</title>
        <authorList>
            <person name="Karanth P.K."/>
            <person name="Stewart C.-B."/>
            <person name="Holt R.A."/>
            <person name="de Koning J."/>
            <person name="Messier W."/>
        </authorList>
    </citation>
    <scope>NUCLEOTIDE SEQUENCE [GENOMIC DNA]</scope>
</reference>
<protein>
    <recommendedName>
        <fullName>Sperm protamine P1</fullName>
    </recommendedName>
</protein>
<sequence>MARYRCCRSQSRSRCCRPRRRCRRRRRRSCRARRRATRCCRRRYRLRCRRY</sequence>
<gene>
    <name type="primary">PRM1</name>
</gene>
<proteinExistence type="evidence at transcript level"/>
<evidence type="ECO:0000250" key="1"/>
<evidence type="ECO:0000305" key="2"/>
<accession>Q9GKQ4</accession>
<feature type="chain" id="PRO_0000191580" description="Sperm protamine P1">
    <location>
        <begin position="1"/>
        <end position="51"/>
    </location>
</feature>
<dbReference type="EMBL" id="AF119234">
    <property type="protein sequence ID" value="AAG42158.1"/>
    <property type="molecule type" value="Genomic_DNA"/>
</dbReference>
<dbReference type="RefSeq" id="XP_033091618.1">
    <property type="nucleotide sequence ID" value="XM_033235727.1"/>
</dbReference>
<dbReference type="GeneID" id="117097646"/>
<dbReference type="GO" id="GO:0000786">
    <property type="term" value="C:nucleosome"/>
    <property type="evidence" value="ECO:0007669"/>
    <property type="project" value="UniProtKB-KW"/>
</dbReference>
<dbReference type="GO" id="GO:0005634">
    <property type="term" value="C:nucleus"/>
    <property type="evidence" value="ECO:0007669"/>
    <property type="project" value="UniProtKB-SubCell"/>
</dbReference>
<dbReference type="GO" id="GO:0003677">
    <property type="term" value="F:DNA binding"/>
    <property type="evidence" value="ECO:0007669"/>
    <property type="project" value="UniProtKB-KW"/>
</dbReference>
<dbReference type="GO" id="GO:0030261">
    <property type="term" value="P:chromosome condensation"/>
    <property type="evidence" value="ECO:0007669"/>
    <property type="project" value="UniProtKB-KW"/>
</dbReference>
<dbReference type="GO" id="GO:0035092">
    <property type="term" value="P:sperm DNA condensation"/>
    <property type="evidence" value="ECO:0007669"/>
    <property type="project" value="InterPro"/>
</dbReference>
<dbReference type="InterPro" id="IPR000221">
    <property type="entry name" value="Protamine_P1"/>
</dbReference>
<dbReference type="Pfam" id="PF00260">
    <property type="entry name" value="Protamine_P1"/>
    <property type="match status" value="1"/>
</dbReference>
<dbReference type="PROSITE" id="PS00048">
    <property type="entry name" value="PROTAMINE_P1"/>
    <property type="match status" value="1"/>
</dbReference>
<name>HSP1_TRAFR</name>
<comment type="function">
    <text evidence="1">Protamines substitute for histones in the chromatin of sperm during the haploid phase of spermatogenesis. They compact sperm DNA into a highly condensed, stable and inactive complex (By similarity).</text>
</comment>
<comment type="subcellular location">
    <subcellularLocation>
        <location evidence="1">Nucleus</location>
    </subcellularLocation>
    <subcellularLocation>
        <location evidence="1">Chromosome</location>
    </subcellularLocation>
</comment>
<comment type="tissue specificity">
    <text>Testis.</text>
</comment>
<comment type="similarity">
    <text evidence="2">Belongs to the protamine P1 family.</text>
</comment>